<reference key="1">
    <citation type="journal article" date="2008" name="PLoS Genet.">
        <title>Complete genome sequence of the N2-fixing broad host range endophyte Klebsiella pneumoniae 342 and virulence predictions verified in mice.</title>
        <authorList>
            <person name="Fouts D.E."/>
            <person name="Tyler H.L."/>
            <person name="DeBoy R.T."/>
            <person name="Daugherty S."/>
            <person name="Ren Q."/>
            <person name="Badger J.H."/>
            <person name="Durkin A.S."/>
            <person name="Huot H."/>
            <person name="Shrivastava S."/>
            <person name="Kothari S."/>
            <person name="Dodson R.J."/>
            <person name="Mohamoud Y."/>
            <person name="Khouri H."/>
            <person name="Roesch L.F.W."/>
            <person name="Krogfelt K.A."/>
            <person name="Struve C."/>
            <person name="Triplett E.W."/>
            <person name="Methe B.A."/>
        </authorList>
    </citation>
    <scope>NUCLEOTIDE SEQUENCE [LARGE SCALE GENOMIC DNA]</scope>
    <source>
        <strain>342</strain>
    </source>
</reference>
<keyword id="KW-0520">NAD</keyword>
<keyword id="KW-0560">Oxidoreductase</keyword>
<keyword id="KW-0816">Tricarboxylic acid cycle</keyword>
<organism>
    <name type="scientific">Klebsiella pneumoniae (strain 342)</name>
    <dbReference type="NCBI Taxonomy" id="507522"/>
    <lineage>
        <taxon>Bacteria</taxon>
        <taxon>Pseudomonadati</taxon>
        <taxon>Pseudomonadota</taxon>
        <taxon>Gammaproteobacteria</taxon>
        <taxon>Enterobacterales</taxon>
        <taxon>Enterobacteriaceae</taxon>
        <taxon>Klebsiella/Raoultella group</taxon>
        <taxon>Klebsiella</taxon>
        <taxon>Klebsiella pneumoniae complex</taxon>
    </lineage>
</organism>
<protein>
    <recommendedName>
        <fullName evidence="1">Malate dehydrogenase</fullName>
        <ecNumber evidence="1">1.1.1.37</ecNumber>
    </recommendedName>
</protein>
<sequence>MKVAVLGAAGGIGQALALLLKTQLPSGSELSLYDIAPVTPGVAVDLSHIPTDVKIKGFSGEDATPALEGADVVLISAGVARKPGMDRSDLFNVNAGIVKNLVQQIAKTCPQACIGVITNPVNTTVAIAAEVLKKAGVYDKNKLFGVTTLDIIRSNTFVAELKGKSATEVEVPVIGGHSGVTILPLLSQIPGVSFSDQEVADLTKRIQNAGTEVVEAKAGGGSATLSMGQAAARFGLSLVRAMQGEKGVVECAYVEGDGHYARFFSQPLLLGKNGVEERQSIGKLSAFEQQALEGMLDTLKKDIALGEDFVNK</sequence>
<accession>B5XSQ7</accession>
<name>MDH_KLEP3</name>
<comment type="function">
    <text evidence="1">Catalyzes the reversible oxidation of malate to oxaloacetate.</text>
</comment>
<comment type="catalytic activity">
    <reaction evidence="1">
        <text>(S)-malate + NAD(+) = oxaloacetate + NADH + H(+)</text>
        <dbReference type="Rhea" id="RHEA:21432"/>
        <dbReference type="ChEBI" id="CHEBI:15378"/>
        <dbReference type="ChEBI" id="CHEBI:15589"/>
        <dbReference type="ChEBI" id="CHEBI:16452"/>
        <dbReference type="ChEBI" id="CHEBI:57540"/>
        <dbReference type="ChEBI" id="CHEBI:57945"/>
        <dbReference type="EC" id="1.1.1.37"/>
    </reaction>
</comment>
<comment type="subunit">
    <text evidence="1">Homodimer.</text>
</comment>
<comment type="similarity">
    <text evidence="1">Belongs to the LDH/MDH superfamily. MDH type 1 family.</text>
</comment>
<evidence type="ECO:0000255" key="1">
    <source>
        <dbReference type="HAMAP-Rule" id="MF_01516"/>
    </source>
</evidence>
<gene>
    <name evidence="1" type="primary">mdh</name>
    <name type="ordered locus">KPK_0477</name>
</gene>
<dbReference type="EC" id="1.1.1.37" evidence="1"/>
<dbReference type="EMBL" id="CP000964">
    <property type="protein sequence ID" value="ACI09474.1"/>
    <property type="molecule type" value="Genomic_DNA"/>
</dbReference>
<dbReference type="SMR" id="B5XSQ7"/>
<dbReference type="KEGG" id="kpe:KPK_0477"/>
<dbReference type="HOGENOM" id="CLU_047181_0_1_6"/>
<dbReference type="Proteomes" id="UP000001734">
    <property type="component" value="Chromosome"/>
</dbReference>
<dbReference type="GO" id="GO:0005737">
    <property type="term" value="C:cytoplasm"/>
    <property type="evidence" value="ECO:0007669"/>
    <property type="project" value="TreeGrafter"/>
</dbReference>
<dbReference type="GO" id="GO:0030060">
    <property type="term" value="F:L-malate dehydrogenase (NAD+) activity"/>
    <property type="evidence" value="ECO:0007669"/>
    <property type="project" value="UniProtKB-UniRule"/>
</dbReference>
<dbReference type="GO" id="GO:0006108">
    <property type="term" value="P:malate metabolic process"/>
    <property type="evidence" value="ECO:0007669"/>
    <property type="project" value="InterPro"/>
</dbReference>
<dbReference type="GO" id="GO:0006099">
    <property type="term" value="P:tricarboxylic acid cycle"/>
    <property type="evidence" value="ECO:0007669"/>
    <property type="project" value="UniProtKB-UniRule"/>
</dbReference>
<dbReference type="CDD" id="cd01337">
    <property type="entry name" value="MDH_glyoxysomal_mitochondrial"/>
    <property type="match status" value="1"/>
</dbReference>
<dbReference type="FunFam" id="3.40.50.720:FF:000017">
    <property type="entry name" value="Malate dehydrogenase"/>
    <property type="match status" value="1"/>
</dbReference>
<dbReference type="FunFam" id="3.90.110.10:FF:000001">
    <property type="entry name" value="Malate dehydrogenase"/>
    <property type="match status" value="1"/>
</dbReference>
<dbReference type="Gene3D" id="3.90.110.10">
    <property type="entry name" value="Lactate dehydrogenase/glycoside hydrolase, family 4, C-terminal"/>
    <property type="match status" value="1"/>
</dbReference>
<dbReference type="Gene3D" id="3.40.50.720">
    <property type="entry name" value="NAD(P)-binding Rossmann-like Domain"/>
    <property type="match status" value="1"/>
</dbReference>
<dbReference type="HAMAP" id="MF_01516">
    <property type="entry name" value="Malate_dehydrog_1"/>
    <property type="match status" value="1"/>
</dbReference>
<dbReference type="InterPro" id="IPR001557">
    <property type="entry name" value="L-lactate/malate_DH"/>
</dbReference>
<dbReference type="InterPro" id="IPR022383">
    <property type="entry name" value="Lactate/malate_DH_C"/>
</dbReference>
<dbReference type="InterPro" id="IPR001236">
    <property type="entry name" value="Lactate/malate_DH_N"/>
</dbReference>
<dbReference type="InterPro" id="IPR015955">
    <property type="entry name" value="Lactate_DH/Glyco_Ohase_4_C"/>
</dbReference>
<dbReference type="InterPro" id="IPR001252">
    <property type="entry name" value="Malate_DH_AS"/>
</dbReference>
<dbReference type="InterPro" id="IPR010097">
    <property type="entry name" value="Malate_DH_type1"/>
</dbReference>
<dbReference type="InterPro" id="IPR023958">
    <property type="entry name" value="Malate_DH_type1_bac"/>
</dbReference>
<dbReference type="InterPro" id="IPR036291">
    <property type="entry name" value="NAD(P)-bd_dom_sf"/>
</dbReference>
<dbReference type="NCBIfam" id="TIGR01772">
    <property type="entry name" value="MDH_euk_gproteo"/>
    <property type="match status" value="1"/>
</dbReference>
<dbReference type="PANTHER" id="PTHR11540">
    <property type="entry name" value="MALATE AND LACTATE DEHYDROGENASE"/>
    <property type="match status" value="1"/>
</dbReference>
<dbReference type="PANTHER" id="PTHR11540:SF16">
    <property type="entry name" value="MALATE DEHYDROGENASE, MITOCHONDRIAL"/>
    <property type="match status" value="1"/>
</dbReference>
<dbReference type="Pfam" id="PF02866">
    <property type="entry name" value="Ldh_1_C"/>
    <property type="match status" value="1"/>
</dbReference>
<dbReference type="Pfam" id="PF00056">
    <property type="entry name" value="Ldh_1_N"/>
    <property type="match status" value="1"/>
</dbReference>
<dbReference type="PIRSF" id="PIRSF000102">
    <property type="entry name" value="Lac_mal_DH"/>
    <property type="match status" value="1"/>
</dbReference>
<dbReference type="SUPFAM" id="SSF56327">
    <property type="entry name" value="LDH C-terminal domain-like"/>
    <property type="match status" value="1"/>
</dbReference>
<dbReference type="SUPFAM" id="SSF51735">
    <property type="entry name" value="NAD(P)-binding Rossmann-fold domains"/>
    <property type="match status" value="1"/>
</dbReference>
<dbReference type="PROSITE" id="PS00068">
    <property type="entry name" value="MDH"/>
    <property type="match status" value="1"/>
</dbReference>
<proteinExistence type="inferred from homology"/>
<feature type="chain" id="PRO_1000191587" description="Malate dehydrogenase">
    <location>
        <begin position="1"/>
        <end position="312"/>
    </location>
</feature>
<feature type="active site" description="Proton acceptor" evidence="1">
    <location>
        <position position="177"/>
    </location>
</feature>
<feature type="binding site" evidence="1">
    <location>
        <begin position="7"/>
        <end position="13"/>
    </location>
    <ligand>
        <name>NAD(+)</name>
        <dbReference type="ChEBI" id="CHEBI:57540"/>
    </ligand>
</feature>
<feature type="binding site" evidence="1">
    <location>
        <position position="34"/>
    </location>
    <ligand>
        <name>NAD(+)</name>
        <dbReference type="ChEBI" id="CHEBI:57540"/>
    </ligand>
</feature>
<feature type="binding site" evidence="1">
    <location>
        <position position="81"/>
    </location>
    <ligand>
        <name>substrate</name>
    </ligand>
</feature>
<feature type="binding site" evidence="1">
    <location>
        <position position="87"/>
    </location>
    <ligand>
        <name>substrate</name>
    </ligand>
</feature>
<feature type="binding site" evidence="1">
    <location>
        <position position="94"/>
    </location>
    <ligand>
        <name>NAD(+)</name>
        <dbReference type="ChEBI" id="CHEBI:57540"/>
    </ligand>
</feature>
<feature type="binding site" evidence="1">
    <location>
        <begin position="117"/>
        <end position="119"/>
    </location>
    <ligand>
        <name>NAD(+)</name>
        <dbReference type="ChEBI" id="CHEBI:57540"/>
    </ligand>
</feature>
<feature type="binding site" evidence="1">
    <location>
        <position position="119"/>
    </location>
    <ligand>
        <name>substrate</name>
    </ligand>
</feature>
<feature type="binding site" evidence="1">
    <location>
        <position position="153"/>
    </location>
    <ligand>
        <name>substrate</name>
    </ligand>
</feature>
<feature type="binding site" evidence="1">
    <location>
        <position position="227"/>
    </location>
    <ligand>
        <name>NAD(+)</name>
        <dbReference type="ChEBI" id="CHEBI:57540"/>
    </ligand>
</feature>